<name>BORG1_HUMAN</name>
<comment type="function">
    <text evidence="4 5">Probably involved in the organization of the actin cytoskeleton. May act downstream of CDC42 to induce actin filament assembly leading to cell shape changes. Induces pseudopodia formation in fibroblasts in a CDC42-dependent manner.</text>
</comment>
<comment type="subunit">
    <text evidence="4 5 6">Interacts with RHOQ and CDC42 in a GTP-dependent manner, and with SEPT7.</text>
</comment>
<comment type="interaction">
    <interactant intactId="EBI-3438291">
        <id>O14613</id>
    </interactant>
    <interactant intactId="EBI-1390913">
        <id>Q9UNA1</id>
        <label>ARHGAP26</label>
    </interactant>
    <organismsDiffer>false</organismsDiffer>
    <experiments>3</experiments>
</comment>
<comment type="interaction">
    <interactant intactId="EBI-3438291">
        <id>O14613</id>
    </interactant>
    <interactant intactId="EBI-16430964">
        <id>Q9UNA1-2</id>
        <label>ARHGAP26</label>
    </interactant>
    <organismsDiffer>false</organismsDiffer>
    <experiments>3</experiments>
</comment>
<comment type="interaction">
    <interactant intactId="EBI-3438291">
        <id>O14613</id>
    </interactant>
    <interactant intactId="EBI-12270182">
        <id>Q9NQ75-2</id>
        <label>CASS4</label>
    </interactant>
    <organismsDiffer>false</organismsDiffer>
    <experiments>4</experiments>
</comment>
<comment type="interaction">
    <interactant intactId="EBI-3438291">
        <id>O14613</id>
    </interactant>
    <interactant intactId="EBI-81752">
        <id>P60953</id>
        <label>CDC42</label>
    </interactant>
    <organismsDiffer>false</organismsDiffer>
    <experiments>10</experiments>
</comment>
<comment type="interaction">
    <interactant intactId="EBI-3438291">
        <id>O14613</id>
    </interactant>
    <interactant intactId="EBI-1053725">
        <id>P10606</id>
        <label>COX5B</label>
    </interactant>
    <organismsDiffer>false</organismsDiffer>
    <experiments>3</experiments>
</comment>
<comment type="interaction">
    <interactant intactId="EBI-3438291">
        <id>O14613</id>
    </interactant>
    <interactant intactId="EBI-11746523">
        <id>Q14511-2</id>
        <label>NEDD9</label>
    </interactant>
    <organismsDiffer>false</organismsDiffer>
    <experiments>3</experiments>
</comment>
<comment type="interaction">
    <interactant intactId="EBI-3438291">
        <id>O14613</id>
    </interactant>
    <interactant intactId="EBI-744782">
        <id>Q9Y5B8</id>
        <label>NME7</label>
    </interactant>
    <organismsDiffer>false</organismsDiffer>
    <experiments>6</experiments>
</comment>
<comment type="interaction">
    <interactant intactId="EBI-3438291">
        <id>O14613</id>
    </interactant>
    <interactant intactId="EBI-79165">
        <id>Q9NRD5</id>
        <label>PICK1</label>
    </interactant>
    <organismsDiffer>false</organismsDiffer>
    <experiments>3</experiments>
</comment>
<comment type="subcellular location">
    <subcellularLocation>
        <location evidence="5">Endomembrane system</location>
        <topology evidence="5">Peripheral membrane protein</topology>
    </subcellularLocation>
    <subcellularLocation>
        <location evidence="5">Cytoplasm</location>
        <location evidence="5">Cytoskeleton</location>
    </subcellularLocation>
</comment>
<comment type="tissue specificity">
    <text evidence="4">Highly expressed in the heart. Weakly expressed in the pancreas and liver.</text>
</comment>
<comment type="domain">
    <text>The CRIB domain mediates interaction with CDC42.</text>
</comment>
<comment type="similarity">
    <text evidence="8">Belongs to the BORG/CEP family.</text>
</comment>
<dbReference type="EMBL" id="AF001436">
    <property type="protein sequence ID" value="AAB81206.1"/>
    <property type="molecule type" value="mRNA"/>
</dbReference>
<dbReference type="EMBL" id="AF163840">
    <property type="protein sequence ID" value="AAD48784.1"/>
    <property type="molecule type" value="mRNA"/>
</dbReference>
<dbReference type="EMBL" id="AF098290">
    <property type="protein sequence ID" value="AAD16185.1"/>
    <property type="molecule type" value="mRNA"/>
</dbReference>
<dbReference type="EMBL" id="AK315444">
    <property type="protein sequence ID" value="BAG37832.1"/>
    <property type="molecule type" value="mRNA"/>
</dbReference>
<dbReference type="EMBL" id="BT020004">
    <property type="protein sequence ID" value="AAV38807.1"/>
    <property type="molecule type" value="mRNA"/>
</dbReference>
<dbReference type="EMBL" id="AF548903">
    <property type="protein sequence ID" value="AAN39381.1"/>
    <property type="molecule type" value="Genomic_DNA"/>
</dbReference>
<dbReference type="EMBL" id="BC022337">
    <property type="protein sequence ID" value="AAH22337.1"/>
    <property type="molecule type" value="mRNA"/>
</dbReference>
<dbReference type="EMBL" id="BC075834">
    <property type="protein sequence ID" value="AAH75834.1"/>
    <property type="molecule type" value="mRNA"/>
</dbReference>
<dbReference type="CCDS" id="CCDS8099.1"/>
<dbReference type="RefSeq" id="NP_006770.1">
    <property type="nucleotide sequence ID" value="NM_006779.4"/>
</dbReference>
<dbReference type="RefSeq" id="XP_016872583.1">
    <property type="nucleotide sequence ID" value="XM_017017094.1"/>
</dbReference>
<dbReference type="RefSeq" id="XP_047282200.1">
    <property type="nucleotide sequence ID" value="XM_047426244.1"/>
</dbReference>
<dbReference type="RefSeq" id="XP_054223433.1">
    <property type="nucleotide sequence ID" value="XM_054367458.1"/>
</dbReference>
<dbReference type="BioGRID" id="115702">
    <property type="interactions" value="17"/>
</dbReference>
<dbReference type="FunCoup" id="O14613">
    <property type="interactions" value="221"/>
</dbReference>
<dbReference type="IntAct" id="O14613">
    <property type="interactions" value="9"/>
</dbReference>
<dbReference type="STRING" id="9606.ENSP00000279249"/>
<dbReference type="iPTMnet" id="O14613"/>
<dbReference type="PhosphoSitePlus" id="O14613"/>
<dbReference type="BioMuta" id="CDC42EP2"/>
<dbReference type="jPOST" id="O14613"/>
<dbReference type="MassIVE" id="O14613"/>
<dbReference type="PaxDb" id="9606-ENSP00000279249"/>
<dbReference type="PeptideAtlas" id="O14613"/>
<dbReference type="ProteomicsDB" id="48116"/>
<dbReference type="Pumba" id="O14613"/>
<dbReference type="Antibodypedia" id="29752">
    <property type="antibodies" value="216 antibodies from 30 providers"/>
</dbReference>
<dbReference type="DNASU" id="10435"/>
<dbReference type="Ensembl" id="ENST00000279249.3">
    <property type="protein sequence ID" value="ENSP00000279249.2"/>
    <property type="gene ID" value="ENSG00000149798.5"/>
</dbReference>
<dbReference type="Ensembl" id="ENST00000533419.1">
    <property type="protein sequence ID" value="ENSP00000431660.1"/>
    <property type="gene ID" value="ENSG00000149798.5"/>
</dbReference>
<dbReference type="GeneID" id="10435"/>
<dbReference type="KEGG" id="hsa:10435"/>
<dbReference type="MANE-Select" id="ENST00000279249.3">
    <property type="protein sequence ID" value="ENSP00000279249.2"/>
    <property type="RefSeq nucleotide sequence ID" value="NM_006779.4"/>
    <property type="RefSeq protein sequence ID" value="NP_006770.1"/>
</dbReference>
<dbReference type="UCSC" id="uc001odl.3">
    <property type="organism name" value="human"/>
</dbReference>
<dbReference type="AGR" id="HGNC:16263"/>
<dbReference type="CTD" id="10435"/>
<dbReference type="DisGeNET" id="10435"/>
<dbReference type="GeneCards" id="CDC42EP2"/>
<dbReference type="HGNC" id="HGNC:16263">
    <property type="gene designation" value="CDC42EP2"/>
</dbReference>
<dbReference type="HPA" id="ENSG00000149798">
    <property type="expression patterns" value="Low tissue specificity"/>
</dbReference>
<dbReference type="MIM" id="606132">
    <property type="type" value="gene"/>
</dbReference>
<dbReference type="neXtProt" id="NX_O14613"/>
<dbReference type="OpenTargets" id="ENSG00000149798"/>
<dbReference type="PharmGKB" id="PA38396"/>
<dbReference type="VEuPathDB" id="HostDB:ENSG00000149798"/>
<dbReference type="eggNOG" id="ENOG502RY28">
    <property type="taxonomic scope" value="Eukaryota"/>
</dbReference>
<dbReference type="GeneTree" id="ENSGT00940000161776"/>
<dbReference type="HOGENOM" id="CLU_073229_0_0_1"/>
<dbReference type="InParanoid" id="O14613"/>
<dbReference type="OMA" id="DQDLGHM"/>
<dbReference type="OrthoDB" id="9948028at2759"/>
<dbReference type="PAN-GO" id="O14613">
    <property type="GO annotations" value="7 GO annotations based on evolutionary models"/>
</dbReference>
<dbReference type="PhylomeDB" id="O14613"/>
<dbReference type="TreeFam" id="TF331725"/>
<dbReference type="PathwayCommons" id="O14613"/>
<dbReference type="Reactome" id="R-HSA-5687128">
    <property type="pathway name" value="MAPK6/MAPK4 signaling"/>
</dbReference>
<dbReference type="Reactome" id="R-HSA-9013148">
    <property type="pathway name" value="CDC42 GTPase cycle"/>
</dbReference>
<dbReference type="Reactome" id="R-HSA-9013406">
    <property type="pathway name" value="RHOQ GTPase cycle"/>
</dbReference>
<dbReference type="SignaLink" id="O14613"/>
<dbReference type="SIGNOR" id="O14613"/>
<dbReference type="BioGRID-ORCS" id="10435">
    <property type="hits" value="21 hits in 1156 CRISPR screens"/>
</dbReference>
<dbReference type="ChiTaRS" id="CDC42EP2">
    <property type="organism name" value="human"/>
</dbReference>
<dbReference type="GeneWiki" id="CDC42EP2"/>
<dbReference type="GenomeRNAi" id="10435"/>
<dbReference type="Pharos" id="O14613">
    <property type="development level" value="Tbio"/>
</dbReference>
<dbReference type="PRO" id="PR:O14613"/>
<dbReference type="Proteomes" id="UP000005640">
    <property type="component" value="Chromosome 11"/>
</dbReference>
<dbReference type="RNAct" id="O14613">
    <property type="molecule type" value="protein"/>
</dbReference>
<dbReference type="Bgee" id="ENSG00000149798">
    <property type="expression patterns" value="Expressed in apex of heart and 93 other cell types or tissues"/>
</dbReference>
<dbReference type="GO" id="GO:0005737">
    <property type="term" value="C:cytoplasm"/>
    <property type="evidence" value="ECO:0000314"/>
    <property type="project" value="UniProtKB"/>
</dbReference>
<dbReference type="GO" id="GO:0005856">
    <property type="term" value="C:cytoskeleton"/>
    <property type="evidence" value="ECO:0000318"/>
    <property type="project" value="GO_Central"/>
</dbReference>
<dbReference type="GO" id="GO:0005829">
    <property type="term" value="C:cytosol"/>
    <property type="evidence" value="ECO:0000314"/>
    <property type="project" value="HPA"/>
</dbReference>
<dbReference type="GO" id="GO:0012505">
    <property type="term" value="C:endomembrane system"/>
    <property type="evidence" value="ECO:0007669"/>
    <property type="project" value="UniProtKB-SubCell"/>
</dbReference>
<dbReference type="GO" id="GO:0016020">
    <property type="term" value="C:membrane"/>
    <property type="evidence" value="ECO:0000314"/>
    <property type="project" value="UniProtKB"/>
</dbReference>
<dbReference type="GO" id="GO:0015630">
    <property type="term" value="C:microtubule cytoskeleton"/>
    <property type="evidence" value="ECO:0000314"/>
    <property type="project" value="HPA"/>
</dbReference>
<dbReference type="GO" id="GO:0045335">
    <property type="term" value="C:phagocytic vesicle"/>
    <property type="evidence" value="ECO:0007669"/>
    <property type="project" value="Ensembl"/>
</dbReference>
<dbReference type="GO" id="GO:0005886">
    <property type="term" value="C:plasma membrane"/>
    <property type="evidence" value="ECO:0000314"/>
    <property type="project" value="UniProtKB"/>
</dbReference>
<dbReference type="GO" id="GO:0005096">
    <property type="term" value="F:GTPase activator activity"/>
    <property type="evidence" value="ECO:0000315"/>
    <property type="project" value="UniProtKB"/>
</dbReference>
<dbReference type="GO" id="GO:0001515">
    <property type="term" value="F:opioid peptide activity"/>
    <property type="evidence" value="ECO:0007669"/>
    <property type="project" value="Ensembl"/>
</dbReference>
<dbReference type="GO" id="GO:0031267">
    <property type="term" value="F:small GTPase binding"/>
    <property type="evidence" value="ECO:0000353"/>
    <property type="project" value="UniProtKB"/>
</dbReference>
<dbReference type="GO" id="GO:0030036">
    <property type="term" value="P:actin cytoskeleton organization"/>
    <property type="evidence" value="ECO:0000314"/>
    <property type="project" value="UniProtKB"/>
</dbReference>
<dbReference type="GO" id="GO:0007015">
    <property type="term" value="P:actin filament organization"/>
    <property type="evidence" value="ECO:0000303"/>
    <property type="project" value="UniProtKB"/>
</dbReference>
<dbReference type="GO" id="GO:0071346">
    <property type="term" value="P:cellular response to type II interferon"/>
    <property type="evidence" value="ECO:0007669"/>
    <property type="project" value="Ensembl"/>
</dbReference>
<dbReference type="GO" id="GO:0030838">
    <property type="term" value="P:positive regulation of actin filament polymerization"/>
    <property type="evidence" value="ECO:0000314"/>
    <property type="project" value="UniProtKB"/>
</dbReference>
<dbReference type="GO" id="GO:0031334">
    <property type="term" value="P:positive regulation of protein-containing complex assembly"/>
    <property type="evidence" value="ECO:0000304"/>
    <property type="project" value="UniProtKB"/>
</dbReference>
<dbReference type="GO" id="GO:0031274">
    <property type="term" value="P:positive regulation of pseudopodium assembly"/>
    <property type="evidence" value="ECO:0000314"/>
    <property type="project" value="UniProtKB"/>
</dbReference>
<dbReference type="GO" id="GO:0008360">
    <property type="term" value="P:regulation of cell shape"/>
    <property type="evidence" value="ECO:0000314"/>
    <property type="project" value="UniProtKB"/>
</dbReference>
<dbReference type="GO" id="GO:0007266">
    <property type="term" value="P:Rho protein signal transduction"/>
    <property type="evidence" value="ECO:0000318"/>
    <property type="project" value="GO_Central"/>
</dbReference>
<dbReference type="InterPro" id="IPR029273">
    <property type="entry name" value="Cdc42_effect-like"/>
</dbReference>
<dbReference type="InterPro" id="IPR051296">
    <property type="entry name" value="Cdc42_Effector_BORG/CEP"/>
</dbReference>
<dbReference type="InterPro" id="IPR017363">
    <property type="entry name" value="Cdc42_effector_prot_2"/>
</dbReference>
<dbReference type="InterPro" id="IPR000095">
    <property type="entry name" value="CRIB_dom"/>
</dbReference>
<dbReference type="PANTHER" id="PTHR15344:SF4">
    <property type="entry name" value="CDC42 EFFECTOR PROTEIN 2"/>
    <property type="match status" value="1"/>
</dbReference>
<dbReference type="PANTHER" id="PTHR15344">
    <property type="entry name" value="CDC42 EFFECTOR PROTEIN BORG"/>
    <property type="match status" value="1"/>
</dbReference>
<dbReference type="Pfam" id="PF14957">
    <property type="entry name" value="BORG_CEP"/>
    <property type="match status" value="2"/>
</dbReference>
<dbReference type="Pfam" id="PF00786">
    <property type="entry name" value="PBD"/>
    <property type="match status" value="1"/>
</dbReference>
<dbReference type="PIRSF" id="PIRSF038036">
    <property type="entry name" value="Cdc42_effector_p2"/>
    <property type="match status" value="1"/>
</dbReference>
<dbReference type="SMART" id="SM00285">
    <property type="entry name" value="PBD"/>
    <property type="match status" value="1"/>
</dbReference>
<dbReference type="PROSITE" id="PS50108">
    <property type="entry name" value="CRIB"/>
    <property type="match status" value="1"/>
</dbReference>
<proteinExistence type="evidence at protein level"/>
<feature type="initiator methionine" description="Removed" evidence="11">
    <location>
        <position position="1"/>
    </location>
</feature>
<feature type="chain" id="PRO_0000212648" description="Cdc42 effector protein 2">
    <location>
        <begin position="2"/>
        <end position="210"/>
    </location>
</feature>
<feature type="domain" description="CRIB" evidence="2">
    <location>
        <begin position="30"/>
        <end position="44"/>
    </location>
</feature>
<feature type="region of interest" description="Disordered" evidence="3">
    <location>
        <begin position="122"/>
        <end position="171"/>
    </location>
</feature>
<feature type="modified residue" description="N-acetylserine" evidence="11">
    <location>
        <position position="2"/>
    </location>
</feature>
<feature type="modified residue" description="Phosphoserine" evidence="9">
    <location>
        <position position="31"/>
    </location>
</feature>
<feature type="modified residue" description="Phosphoserine" evidence="1">
    <location>
        <position position="101"/>
    </location>
</feature>
<feature type="modified residue" description="Phosphoserine" evidence="9 10">
    <location>
        <position position="141"/>
    </location>
</feature>
<feature type="sequence variant" id="VAR_023001" description="In dbSNP:rs4149839." evidence="7">
    <original>N</original>
    <variation>S</variation>
    <location>
        <position position="176"/>
    </location>
</feature>
<feature type="sequence variant" id="VAR_023002" description="In dbSNP:rs7120634." evidence="7">
    <original>I</original>
    <variation>F</variation>
    <location>
        <position position="191"/>
    </location>
</feature>
<feature type="mutagenesis site" description="No binding with CDC42; no induced pseudopodia formation." evidence="5">
    <original>HTIH</original>
    <variation>ATIA</variation>
    <location>
        <begin position="39"/>
        <end position="42"/>
    </location>
</feature>
<feature type="sequence conflict" description="In Ref. 3; AAD16185." evidence="8" ref="3">
    <original>C</original>
    <variation>V</variation>
    <location>
        <position position="92"/>
    </location>
</feature>
<accession>O14613</accession>
<accession>B2RD85</accession>
<accession>Q9UNS0</accession>
<keyword id="KW-0007">Acetylation</keyword>
<keyword id="KW-0133">Cell shape</keyword>
<keyword id="KW-0963">Cytoplasm</keyword>
<keyword id="KW-0206">Cytoskeleton</keyword>
<keyword id="KW-0472">Membrane</keyword>
<keyword id="KW-0597">Phosphoprotein</keyword>
<keyword id="KW-1267">Proteomics identification</keyword>
<keyword id="KW-1185">Reference proteome</keyword>
<gene>
    <name type="primary">CDC42EP2</name>
    <name type="synonym">BORG1</name>
    <name type="synonym">CEP2</name>
</gene>
<protein>
    <recommendedName>
        <fullName>Cdc42 effector protein 2</fullName>
    </recommendedName>
    <alternativeName>
        <fullName>Binder of Rho GTPases 1</fullName>
    </alternativeName>
</protein>
<evidence type="ECO:0000250" key="1">
    <source>
        <dbReference type="UniProtKB" id="Q5PQP4"/>
    </source>
</evidence>
<evidence type="ECO:0000255" key="2">
    <source>
        <dbReference type="PROSITE-ProRule" id="PRU00057"/>
    </source>
</evidence>
<evidence type="ECO:0000256" key="3">
    <source>
        <dbReference type="SAM" id="MobiDB-lite"/>
    </source>
</evidence>
<evidence type="ECO:0000269" key="4">
    <source>
    </source>
</evidence>
<evidence type="ECO:0000269" key="5">
    <source>
    </source>
</evidence>
<evidence type="ECO:0000269" key="6">
    <source>
    </source>
</evidence>
<evidence type="ECO:0000269" key="7">
    <source ref="6"/>
</evidence>
<evidence type="ECO:0000305" key="8"/>
<evidence type="ECO:0007744" key="9">
    <source>
    </source>
</evidence>
<evidence type="ECO:0007744" key="10">
    <source>
    </source>
</evidence>
<evidence type="ECO:0007744" key="11">
    <source>
    </source>
</evidence>
<sequence>MSTKVPIYLKRGSRKGKKEKLRDLLSSDMISPPLGDFRHTIHIGSGGGSDMFGDISFLQGKFHLLPGTMVEGPEEDGTFDLPFQFTRTATVCGRELPDGPSPLLKNAISLPVIGGPQALTLPTAQAPPKPPRLHLETPQPSPQEGGSVDIWRIPETGSPNSGLTPESGAEEPFLSNASSLLSLHVDLGPSILDDVLQIMDQDLDSMQIPT</sequence>
<organism>
    <name type="scientific">Homo sapiens</name>
    <name type="common">Human</name>
    <dbReference type="NCBI Taxonomy" id="9606"/>
    <lineage>
        <taxon>Eukaryota</taxon>
        <taxon>Metazoa</taxon>
        <taxon>Chordata</taxon>
        <taxon>Craniata</taxon>
        <taxon>Vertebrata</taxon>
        <taxon>Euteleostomi</taxon>
        <taxon>Mammalia</taxon>
        <taxon>Eutheria</taxon>
        <taxon>Euarchontoglires</taxon>
        <taxon>Primates</taxon>
        <taxon>Haplorrhini</taxon>
        <taxon>Catarrhini</taxon>
        <taxon>Hominidae</taxon>
        <taxon>Homo</taxon>
    </lineage>
</organism>
<reference key="1">
    <citation type="journal article" date="1997" name="Genome Res.">
        <title>A transcript map for the 2.8-Mb region containing the multiple endocrine neoplasia type 1 locus.</title>
        <authorList>
            <person name="Guru S.C."/>
            <person name="Agarwal S.K."/>
            <person name="Manickam P."/>
            <person name="Olufemi S.-E."/>
            <person name="Crabtree J.S."/>
            <person name="Weisemann J.M."/>
            <person name="Kester M.B."/>
            <person name="Kim Y.S."/>
            <person name="Wang Y."/>
            <person name="Emmert-Buck M.R."/>
            <person name="Liotta L.A."/>
            <person name="Spiegel A.M."/>
            <person name="Boguski M.S."/>
            <person name="Roe B.A."/>
            <person name="Collins F.S."/>
            <person name="Burns A.L."/>
            <person name="Marx S.J."/>
            <person name="Chandrasekharappa S.C."/>
        </authorList>
    </citation>
    <scope>NUCLEOTIDE SEQUENCE [MRNA]</scope>
</reference>
<reference key="2">
    <citation type="journal article" date="1999" name="Mol. Cell. Biol.">
        <title>The Borgs, a new family of Cdc42 and TC10 GTPase-interacting proteins.</title>
        <authorList>
            <person name="Joberty G."/>
            <person name="Perlungher R.R."/>
            <person name="Macara I.G."/>
        </authorList>
    </citation>
    <scope>NUCLEOTIDE SEQUENCE [MRNA]</scope>
    <scope>FUNCTION</scope>
    <scope>INTERACTION WITH RHOQ AND CDC42</scope>
    <scope>TISSUE SPECIFICITY</scope>
    <source>
        <tissue>Embryo</tissue>
    </source>
</reference>
<reference key="3">
    <citation type="journal article" date="2001" name="J. Biol. Chem.">
        <title>A new family of Cdc42 effector proteins, CEPs, function in fibroblast and epithelial cell shape changes.</title>
        <authorList>
            <person name="Hirsch D.S."/>
            <person name="Pirone D.M."/>
            <person name="Burbelo P.D."/>
        </authorList>
    </citation>
    <scope>NUCLEOTIDE SEQUENCE [MRNA]</scope>
    <scope>FUNCTION</scope>
    <scope>INTERACTION WITH CDC42</scope>
    <scope>MUTAGENESIS OF 39-HIS--HIS-42</scope>
    <scope>SUBCELLULAR LOCATION</scope>
    <source>
        <tissue>Brain</tissue>
    </source>
</reference>
<reference key="4">
    <citation type="journal article" date="2004" name="Nat. Genet.">
        <title>Complete sequencing and characterization of 21,243 full-length human cDNAs.</title>
        <authorList>
            <person name="Ota T."/>
            <person name="Suzuki Y."/>
            <person name="Nishikawa T."/>
            <person name="Otsuki T."/>
            <person name="Sugiyama T."/>
            <person name="Irie R."/>
            <person name="Wakamatsu A."/>
            <person name="Hayashi K."/>
            <person name="Sato H."/>
            <person name="Nagai K."/>
            <person name="Kimura K."/>
            <person name="Makita H."/>
            <person name="Sekine M."/>
            <person name="Obayashi M."/>
            <person name="Nishi T."/>
            <person name="Shibahara T."/>
            <person name="Tanaka T."/>
            <person name="Ishii S."/>
            <person name="Yamamoto J."/>
            <person name="Saito K."/>
            <person name="Kawai Y."/>
            <person name="Isono Y."/>
            <person name="Nakamura Y."/>
            <person name="Nagahari K."/>
            <person name="Murakami K."/>
            <person name="Yasuda T."/>
            <person name="Iwayanagi T."/>
            <person name="Wagatsuma M."/>
            <person name="Shiratori A."/>
            <person name="Sudo H."/>
            <person name="Hosoiri T."/>
            <person name="Kaku Y."/>
            <person name="Kodaira H."/>
            <person name="Kondo H."/>
            <person name="Sugawara M."/>
            <person name="Takahashi M."/>
            <person name="Kanda K."/>
            <person name="Yokoi T."/>
            <person name="Furuya T."/>
            <person name="Kikkawa E."/>
            <person name="Omura Y."/>
            <person name="Abe K."/>
            <person name="Kamihara K."/>
            <person name="Katsuta N."/>
            <person name="Sato K."/>
            <person name="Tanikawa M."/>
            <person name="Yamazaki M."/>
            <person name="Ninomiya K."/>
            <person name="Ishibashi T."/>
            <person name="Yamashita H."/>
            <person name="Murakawa K."/>
            <person name="Fujimori K."/>
            <person name="Tanai H."/>
            <person name="Kimata M."/>
            <person name="Watanabe M."/>
            <person name="Hiraoka S."/>
            <person name="Chiba Y."/>
            <person name="Ishida S."/>
            <person name="Ono Y."/>
            <person name="Takiguchi S."/>
            <person name="Watanabe S."/>
            <person name="Yosida M."/>
            <person name="Hotuta T."/>
            <person name="Kusano J."/>
            <person name="Kanehori K."/>
            <person name="Takahashi-Fujii A."/>
            <person name="Hara H."/>
            <person name="Tanase T.-O."/>
            <person name="Nomura Y."/>
            <person name="Togiya S."/>
            <person name="Komai F."/>
            <person name="Hara R."/>
            <person name="Takeuchi K."/>
            <person name="Arita M."/>
            <person name="Imose N."/>
            <person name="Musashino K."/>
            <person name="Yuuki H."/>
            <person name="Oshima A."/>
            <person name="Sasaki N."/>
            <person name="Aotsuka S."/>
            <person name="Yoshikawa Y."/>
            <person name="Matsunawa H."/>
            <person name="Ichihara T."/>
            <person name="Shiohata N."/>
            <person name="Sano S."/>
            <person name="Moriya S."/>
            <person name="Momiyama H."/>
            <person name="Satoh N."/>
            <person name="Takami S."/>
            <person name="Terashima Y."/>
            <person name="Suzuki O."/>
            <person name="Nakagawa S."/>
            <person name="Senoh A."/>
            <person name="Mizoguchi H."/>
            <person name="Goto Y."/>
            <person name="Shimizu F."/>
            <person name="Wakebe H."/>
            <person name="Hishigaki H."/>
            <person name="Watanabe T."/>
            <person name="Sugiyama A."/>
            <person name="Takemoto M."/>
            <person name="Kawakami B."/>
            <person name="Yamazaki M."/>
            <person name="Watanabe K."/>
            <person name="Kumagai A."/>
            <person name="Itakura S."/>
            <person name="Fukuzumi Y."/>
            <person name="Fujimori Y."/>
            <person name="Komiyama M."/>
            <person name="Tashiro H."/>
            <person name="Tanigami A."/>
            <person name="Fujiwara T."/>
            <person name="Ono T."/>
            <person name="Yamada K."/>
            <person name="Fujii Y."/>
            <person name="Ozaki K."/>
            <person name="Hirao M."/>
            <person name="Ohmori Y."/>
            <person name="Kawabata A."/>
            <person name="Hikiji T."/>
            <person name="Kobatake N."/>
            <person name="Inagaki H."/>
            <person name="Ikema Y."/>
            <person name="Okamoto S."/>
            <person name="Okitani R."/>
            <person name="Kawakami T."/>
            <person name="Noguchi S."/>
            <person name="Itoh T."/>
            <person name="Shigeta K."/>
            <person name="Senba T."/>
            <person name="Matsumura K."/>
            <person name="Nakajima Y."/>
            <person name="Mizuno T."/>
            <person name="Morinaga M."/>
            <person name="Sasaki M."/>
            <person name="Togashi T."/>
            <person name="Oyama M."/>
            <person name="Hata H."/>
            <person name="Watanabe M."/>
            <person name="Komatsu T."/>
            <person name="Mizushima-Sugano J."/>
            <person name="Satoh T."/>
            <person name="Shirai Y."/>
            <person name="Takahashi Y."/>
            <person name="Nakagawa K."/>
            <person name="Okumura K."/>
            <person name="Nagase T."/>
            <person name="Nomura N."/>
            <person name="Kikuchi H."/>
            <person name="Masuho Y."/>
            <person name="Yamashita R."/>
            <person name="Nakai K."/>
            <person name="Yada T."/>
            <person name="Nakamura Y."/>
            <person name="Ohara O."/>
            <person name="Isogai T."/>
            <person name="Sugano S."/>
        </authorList>
    </citation>
    <scope>NUCLEOTIDE SEQUENCE [LARGE SCALE MRNA]</scope>
    <source>
        <tissue>Heart</tissue>
    </source>
</reference>
<reference key="5">
    <citation type="submission" date="2004-10" db="EMBL/GenBank/DDBJ databases">
        <title>Cloning of human full-length CDSs in BD Creator(TM) system donor vector.</title>
        <authorList>
            <person name="Kalnine N."/>
            <person name="Chen X."/>
            <person name="Rolfs A."/>
            <person name="Halleck A."/>
            <person name="Hines L."/>
            <person name="Eisenstein S."/>
            <person name="Koundinya M."/>
            <person name="Raphael J."/>
            <person name="Moreira D."/>
            <person name="Kelley T."/>
            <person name="LaBaer J."/>
            <person name="Lin Y."/>
            <person name="Phelan M."/>
            <person name="Farmer A."/>
        </authorList>
    </citation>
    <scope>NUCLEOTIDE SEQUENCE [LARGE SCALE MRNA]</scope>
</reference>
<reference key="6">
    <citation type="submission" date="2002-10" db="EMBL/GenBank/DDBJ databases">
        <authorList>
            <consortium name="NIEHS SNPs program"/>
        </authorList>
    </citation>
    <scope>NUCLEOTIDE SEQUENCE [GENOMIC DNA]</scope>
    <scope>VARIANTS SER-176 AND PHE-191</scope>
</reference>
<reference key="7">
    <citation type="journal article" date="2004" name="Genome Res.">
        <title>The status, quality, and expansion of the NIH full-length cDNA project: the Mammalian Gene Collection (MGC).</title>
        <authorList>
            <consortium name="The MGC Project Team"/>
        </authorList>
    </citation>
    <scope>NUCLEOTIDE SEQUENCE [LARGE SCALE MRNA]</scope>
    <source>
        <tissue>Lung</tissue>
        <tissue>Pancreas</tissue>
    </source>
</reference>
<reference key="8">
    <citation type="journal article" date="2001" name="Nat. Cell Biol.">
        <title>Borg proteins control septin organization and are negatively regulated by Cdc42.</title>
        <authorList>
            <person name="Joberty G."/>
            <person name="Perlungher R.R."/>
            <person name="Sheffield P.J."/>
            <person name="Kinoshita M."/>
            <person name="Noda M."/>
            <person name="Haystead T."/>
            <person name="Macara I.G."/>
        </authorList>
    </citation>
    <scope>INTERACTION WITH SEPT7</scope>
</reference>
<reference key="9">
    <citation type="journal article" date="2008" name="Mol. Cell">
        <title>Kinase-selective enrichment enables quantitative phosphoproteomics of the kinome across the cell cycle.</title>
        <authorList>
            <person name="Daub H."/>
            <person name="Olsen J.V."/>
            <person name="Bairlein M."/>
            <person name="Gnad F."/>
            <person name="Oppermann F.S."/>
            <person name="Korner R."/>
            <person name="Greff Z."/>
            <person name="Keri G."/>
            <person name="Stemmann O."/>
            <person name="Mann M."/>
        </authorList>
    </citation>
    <scope>PHOSPHORYLATION [LARGE SCALE ANALYSIS] AT SER-31 AND SER-141</scope>
    <scope>IDENTIFICATION BY MASS SPECTROMETRY [LARGE SCALE ANALYSIS]</scope>
    <source>
        <tissue>Cervix carcinoma</tissue>
    </source>
</reference>
<reference key="10">
    <citation type="journal article" date="2010" name="Sci. Signal.">
        <title>Quantitative phosphoproteomics reveals widespread full phosphorylation site occupancy during mitosis.</title>
        <authorList>
            <person name="Olsen J.V."/>
            <person name="Vermeulen M."/>
            <person name="Santamaria A."/>
            <person name="Kumar C."/>
            <person name="Miller M.L."/>
            <person name="Jensen L.J."/>
            <person name="Gnad F."/>
            <person name="Cox J."/>
            <person name="Jensen T.S."/>
            <person name="Nigg E.A."/>
            <person name="Brunak S."/>
            <person name="Mann M."/>
        </authorList>
    </citation>
    <scope>PHOSPHORYLATION [LARGE SCALE ANALYSIS] AT SER-141</scope>
    <scope>IDENTIFICATION BY MASS SPECTROMETRY [LARGE SCALE ANALYSIS]</scope>
    <source>
        <tissue>Cervix carcinoma</tissue>
    </source>
</reference>
<reference key="11">
    <citation type="journal article" date="2012" name="Proc. Natl. Acad. Sci. U.S.A.">
        <title>N-terminal acetylome analyses and functional insights of the N-terminal acetyltransferase NatB.</title>
        <authorList>
            <person name="Van Damme P."/>
            <person name="Lasa M."/>
            <person name="Polevoda B."/>
            <person name="Gazquez C."/>
            <person name="Elosegui-Artola A."/>
            <person name="Kim D.S."/>
            <person name="De Juan-Pardo E."/>
            <person name="Demeyer K."/>
            <person name="Hole K."/>
            <person name="Larrea E."/>
            <person name="Timmerman E."/>
            <person name="Prieto J."/>
            <person name="Arnesen T."/>
            <person name="Sherman F."/>
            <person name="Gevaert K."/>
            <person name="Aldabe R."/>
        </authorList>
    </citation>
    <scope>ACETYLATION [LARGE SCALE ANALYSIS] AT SER-2</scope>
    <scope>CLEAVAGE OF INITIATOR METHIONINE [LARGE SCALE ANALYSIS]</scope>
    <scope>IDENTIFICATION BY MASS SPECTROMETRY [LARGE SCALE ANALYSIS]</scope>
</reference>
<reference key="12">
    <citation type="journal article" date="2013" name="J. Proteome Res.">
        <title>Toward a comprehensive characterization of a human cancer cell phosphoproteome.</title>
        <authorList>
            <person name="Zhou H."/>
            <person name="Di Palma S."/>
            <person name="Preisinger C."/>
            <person name="Peng M."/>
            <person name="Polat A.N."/>
            <person name="Heck A.J."/>
            <person name="Mohammed S."/>
        </authorList>
    </citation>
    <scope>IDENTIFICATION BY MASS SPECTROMETRY [LARGE SCALE ANALYSIS]</scope>
    <source>
        <tissue>Cervix carcinoma</tissue>
    </source>
</reference>